<comment type="function">
    <text evidence="1">Mnh complex is a Na(+)/H(+) antiporter involved in Na(+) excretion.</text>
</comment>
<comment type="subunit">
    <text evidence="1">May form a heterooligomeric complex that consists of seven subunits: mnhA1, mnhB1, mnhC1, mnhD1, mnhE1, mnhF1 and mnhG1.</text>
</comment>
<comment type="subcellular location">
    <subcellularLocation>
        <location evidence="3">Cell membrane</location>
        <topology evidence="3">Multi-pass membrane protein</topology>
    </subcellularLocation>
</comment>
<comment type="similarity">
    <text evidence="3">Belongs to the CPA3 antiporters (TC 2.A.63) subunit D family.</text>
</comment>
<gene>
    <name type="primary">mnhD</name>
    <name type="ordered locus">SH2002</name>
</gene>
<evidence type="ECO:0000250" key="1"/>
<evidence type="ECO:0000255" key="2"/>
<evidence type="ECO:0000305" key="3"/>
<keyword id="KW-0050">Antiport</keyword>
<keyword id="KW-1003">Cell membrane</keyword>
<keyword id="KW-0375">Hydrogen ion transport</keyword>
<keyword id="KW-0406">Ion transport</keyword>
<keyword id="KW-0472">Membrane</keyword>
<keyword id="KW-0915">Sodium</keyword>
<keyword id="KW-0739">Sodium transport</keyword>
<keyword id="KW-0812">Transmembrane</keyword>
<keyword id="KW-1133">Transmembrane helix</keyword>
<keyword id="KW-0813">Transport</keyword>
<accession>Q4L4W4</accession>
<organism>
    <name type="scientific">Staphylococcus haemolyticus (strain JCSC1435)</name>
    <dbReference type="NCBI Taxonomy" id="279808"/>
    <lineage>
        <taxon>Bacteria</taxon>
        <taxon>Bacillati</taxon>
        <taxon>Bacillota</taxon>
        <taxon>Bacilli</taxon>
        <taxon>Bacillales</taxon>
        <taxon>Staphylococcaceae</taxon>
        <taxon>Staphylococcus</taxon>
    </lineage>
</organism>
<feature type="chain" id="PRO_0000372139" description="Na+/H+-antiporter, MnhD subunit">
    <location>
        <begin position="1"/>
        <end position="499"/>
    </location>
</feature>
<feature type="transmembrane region" description="Helical" evidence="2">
    <location>
        <begin position="5"/>
        <end position="25"/>
    </location>
</feature>
<feature type="transmembrane region" description="Helical" evidence="2">
    <location>
        <begin position="33"/>
        <end position="53"/>
    </location>
</feature>
<feature type="transmembrane region" description="Helical" evidence="2">
    <location>
        <begin position="72"/>
        <end position="92"/>
    </location>
</feature>
<feature type="transmembrane region" description="Helical" evidence="2">
    <location>
        <begin position="109"/>
        <end position="129"/>
    </location>
</feature>
<feature type="transmembrane region" description="Helical" evidence="2">
    <location>
        <begin position="131"/>
        <end position="151"/>
    </location>
</feature>
<feature type="transmembrane region" description="Helical" evidence="2">
    <location>
        <begin position="169"/>
        <end position="189"/>
    </location>
</feature>
<feature type="transmembrane region" description="Helical" evidence="2">
    <location>
        <begin position="207"/>
        <end position="227"/>
    </location>
</feature>
<feature type="transmembrane region" description="Helical" evidence="2">
    <location>
        <begin position="241"/>
        <end position="261"/>
    </location>
</feature>
<feature type="transmembrane region" description="Helical" evidence="2">
    <location>
        <begin position="277"/>
        <end position="297"/>
    </location>
</feature>
<feature type="transmembrane region" description="Helical" evidence="2">
    <location>
        <begin position="303"/>
        <end position="323"/>
    </location>
</feature>
<feature type="transmembrane region" description="Helical" evidence="2">
    <location>
        <begin position="327"/>
        <end position="347"/>
    </location>
</feature>
<feature type="transmembrane region" description="Helical" evidence="2">
    <location>
        <begin position="373"/>
        <end position="393"/>
    </location>
</feature>
<feature type="transmembrane region" description="Helical" evidence="2">
    <location>
        <begin position="410"/>
        <end position="430"/>
    </location>
</feature>
<feature type="transmembrane region" description="Helical" evidence="2">
    <location>
        <begin position="457"/>
        <end position="477"/>
    </location>
</feature>
<protein>
    <recommendedName>
        <fullName>Na+/H+-antiporter, MnhD subunit</fullName>
    </recommendedName>
</protein>
<reference key="1">
    <citation type="journal article" date="2005" name="J. Bacteriol.">
        <title>Whole-genome sequencing of Staphylococcus haemolyticus uncovers the extreme plasticity of its genome and the evolution of human-colonizing staphylococcal species.</title>
        <authorList>
            <person name="Takeuchi F."/>
            <person name="Watanabe S."/>
            <person name="Baba T."/>
            <person name="Yuzawa H."/>
            <person name="Ito T."/>
            <person name="Morimoto Y."/>
            <person name="Kuroda M."/>
            <person name="Cui L."/>
            <person name="Takahashi M."/>
            <person name="Ankai A."/>
            <person name="Baba S."/>
            <person name="Fukui S."/>
            <person name="Lee J.C."/>
            <person name="Hiramatsu K."/>
        </authorList>
    </citation>
    <scope>NUCLEOTIDE SEQUENCE [LARGE SCALE GENOMIC DNA]</scope>
    <source>
        <strain>JCSC1435</strain>
    </source>
</reference>
<dbReference type="EMBL" id="AP006716">
    <property type="protein sequence ID" value="BAE05311.1"/>
    <property type="molecule type" value="Genomic_DNA"/>
</dbReference>
<dbReference type="RefSeq" id="WP_011276269.1">
    <property type="nucleotide sequence ID" value="NC_007168.1"/>
</dbReference>
<dbReference type="SMR" id="Q4L4W4"/>
<dbReference type="KEGG" id="sha:SH2002"/>
<dbReference type="eggNOG" id="COG0651">
    <property type="taxonomic scope" value="Bacteria"/>
</dbReference>
<dbReference type="HOGENOM" id="CLU_007100_9_2_9"/>
<dbReference type="OrthoDB" id="9811718at2"/>
<dbReference type="Proteomes" id="UP000000543">
    <property type="component" value="Chromosome"/>
</dbReference>
<dbReference type="GO" id="GO:0005886">
    <property type="term" value="C:plasma membrane"/>
    <property type="evidence" value="ECO:0007669"/>
    <property type="project" value="UniProtKB-SubCell"/>
</dbReference>
<dbReference type="GO" id="GO:0015297">
    <property type="term" value="F:antiporter activity"/>
    <property type="evidence" value="ECO:0007669"/>
    <property type="project" value="UniProtKB-KW"/>
</dbReference>
<dbReference type="GO" id="GO:0008137">
    <property type="term" value="F:NADH dehydrogenase (ubiquinone) activity"/>
    <property type="evidence" value="ECO:0007669"/>
    <property type="project" value="InterPro"/>
</dbReference>
<dbReference type="GO" id="GO:0042773">
    <property type="term" value="P:ATP synthesis coupled electron transport"/>
    <property type="evidence" value="ECO:0007669"/>
    <property type="project" value="InterPro"/>
</dbReference>
<dbReference type="GO" id="GO:0006814">
    <property type="term" value="P:sodium ion transport"/>
    <property type="evidence" value="ECO:0007669"/>
    <property type="project" value="UniProtKB-KW"/>
</dbReference>
<dbReference type="InterPro" id="IPR050586">
    <property type="entry name" value="CPA3_Na-H_Antiporter_D"/>
</dbReference>
<dbReference type="InterPro" id="IPR003918">
    <property type="entry name" value="NADH_UbQ_OxRdtase"/>
</dbReference>
<dbReference type="InterPro" id="IPR001750">
    <property type="entry name" value="ND/Mrp_TM"/>
</dbReference>
<dbReference type="NCBIfam" id="NF005818">
    <property type="entry name" value="PRK07691.1"/>
    <property type="match status" value="1"/>
</dbReference>
<dbReference type="PANTHER" id="PTHR42703:SF1">
    <property type="entry name" value="NA(+)_H(+) ANTIPORTER SUBUNIT D1"/>
    <property type="match status" value="1"/>
</dbReference>
<dbReference type="PANTHER" id="PTHR42703">
    <property type="entry name" value="NADH DEHYDROGENASE"/>
    <property type="match status" value="1"/>
</dbReference>
<dbReference type="Pfam" id="PF00361">
    <property type="entry name" value="Proton_antipo_M"/>
    <property type="match status" value="1"/>
</dbReference>
<dbReference type="PRINTS" id="PR01437">
    <property type="entry name" value="NUOXDRDTASE4"/>
</dbReference>
<name>MNHD1_STAHJ</name>
<proteinExistence type="inferred from homology"/>
<sequence length="499" mass="54885">MIENNLVVLSLVVPIFTAIILVFLGQRYRAKRYVTLTGLVLTLIVAIINLRNVYVDGPLKVELGSWPAPYGIIFLLDSFSAMLIVTSIIITILITAFSSTTAGIDRERYYYHFSITFMLVGIIGAFTTGDIFNLFVFFEVFLMSSYALLVLGGTQIQLRETVKYLLVNIVTSTFFVIAVAILYSIVGTLNMADISEKLSTLSNTHGGLLSIVFILFIFVFATKAGAFPMYVWLPGSYYAPPFAIIAFFGALLTKVGVYAILRTLSLFFHNTMSFSHYTILFLALLTIIFGSVGAIAYDDTKKIIIYNIMIAVGVILVGVAMMNEAGIIGAIYYTIHDMLVKTALFLLIGVMYQITKSTSLKDFGGLIKHYPVLGWTFFIAALSLAGIPPLSGFYGKYYIVQATFEKGFYVSGIIVLLSSLVVLYSVIHIFLKGFFGKPKGYEPTQSVNVKHATTISIIAVVITVVFGLSADLLYPLISEAAQSFYDPSIYIESVLGGRS</sequence>